<keyword id="KW-1003">Cell membrane</keyword>
<keyword id="KW-0472">Membrane</keyword>
<keyword id="KW-1185">Reference proteome</keyword>
<keyword id="KW-0812">Transmembrane</keyword>
<keyword id="KW-1133">Transmembrane helix</keyword>
<reference key="1">
    <citation type="journal article" date="2009" name="PLoS Genet.">
        <title>Organised genome dynamics in the Escherichia coli species results in highly diverse adaptive paths.</title>
        <authorList>
            <person name="Touchon M."/>
            <person name="Hoede C."/>
            <person name="Tenaillon O."/>
            <person name="Barbe V."/>
            <person name="Baeriswyl S."/>
            <person name="Bidet P."/>
            <person name="Bingen E."/>
            <person name="Bonacorsi S."/>
            <person name="Bouchier C."/>
            <person name="Bouvet O."/>
            <person name="Calteau A."/>
            <person name="Chiapello H."/>
            <person name="Clermont O."/>
            <person name="Cruveiller S."/>
            <person name="Danchin A."/>
            <person name="Diard M."/>
            <person name="Dossat C."/>
            <person name="Karoui M.E."/>
            <person name="Frapy E."/>
            <person name="Garry L."/>
            <person name="Ghigo J.M."/>
            <person name="Gilles A.M."/>
            <person name="Johnson J."/>
            <person name="Le Bouguenec C."/>
            <person name="Lescat M."/>
            <person name="Mangenot S."/>
            <person name="Martinez-Jehanne V."/>
            <person name="Matic I."/>
            <person name="Nassif X."/>
            <person name="Oztas S."/>
            <person name="Petit M.A."/>
            <person name="Pichon C."/>
            <person name="Rouy Z."/>
            <person name="Ruf C.S."/>
            <person name="Schneider D."/>
            <person name="Tourret J."/>
            <person name="Vacherie B."/>
            <person name="Vallenet D."/>
            <person name="Medigue C."/>
            <person name="Rocha E.P.C."/>
            <person name="Denamur E."/>
        </authorList>
    </citation>
    <scope>NUCLEOTIDE SEQUENCE [LARGE SCALE GENOMIC DNA]</scope>
    <source>
        <strain>S88 / ExPEC</strain>
    </source>
</reference>
<name>YEAL_ECO45</name>
<comment type="subcellular location">
    <subcellularLocation>
        <location evidence="1">Cell membrane</location>
        <topology evidence="1">Multi-pass membrane protein</topology>
    </subcellularLocation>
</comment>
<comment type="similarity">
    <text evidence="1">Belongs to the UPF0756 family.</text>
</comment>
<proteinExistence type="inferred from homology"/>
<accession>B7MBJ8</accession>
<protein>
    <recommendedName>
        <fullName evidence="1">UPF0756 membrane protein YeaL</fullName>
    </recommendedName>
</protein>
<feature type="chain" id="PRO_0000388868" description="UPF0756 membrane protein YeaL">
    <location>
        <begin position="1"/>
        <end position="148"/>
    </location>
</feature>
<feature type="transmembrane region" description="Helical" evidence="1">
    <location>
        <begin position="14"/>
        <end position="34"/>
    </location>
</feature>
<feature type="transmembrane region" description="Helical" evidence="1">
    <location>
        <begin position="51"/>
        <end position="71"/>
    </location>
</feature>
<feature type="transmembrane region" description="Helical" evidence="1">
    <location>
        <begin position="86"/>
        <end position="106"/>
    </location>
</feature>
<feature type="transmembrane region" description="Helical" evidence="1">
    <location>
        <begin position="121"/>
        <end position="141"/>
    </location>
</feature>
<organism>
    <name type="scientific">Escherichia coli O45:K1 (strain S88 / ExPEC)</name>
    <dbReference type="NCBI Taxonomy" id="585035"/>
    <lineage>
        <taxon>Bacteria</taxon>
        <taxon>Pseudomonadati</taxon>
        <taxon>Pseudomonadota</taxon>
        <taxon>Gammaproteobacteria</taxon>
        <taxon>Enterobacterales</taxon>
        <taxon>Enterobacteriaceae</taxon>
        <taxon>Escherichia</taxon>
    </lineage>
</organism>
<evidence type="ECO:0000255" key="1">
    <source>
        <dbReference type="HAMAP-Rule" id="MF_01874"/>
    </source>
</evidence>
<sequence length="148" mass="15256">MFDVTLLILLGLAALGFISHNTTVAVSILVLIIVRVTPLSTFFPWIEKQGLSIGIIILTIGVMAPIASGTLPPSTLIHSFLNWKSLVAIAVGVIVSWLGGRGVTLMGSQPQLVAGLLVGTVLGVALFRGVPVGPLIAAGLVSLIVGKQ</sequence>
<dbReference type="EMBL" id="CU928161">
    <property type="protein sequence ID" value="CAR03150.1"/>
    <property type="molecule type" value="Genomic_DNA"/>
</dbReference>
<dbReference type="RefSeq" id="WP_000460707.1">
    <property type="nucleotide sequence ID" value="NC_011742.1"/>
</dbReference>
<dbReference type="KEGG" id="ecz:ECS88_1843"/>
<dbReference type="HOGENOM" id="CLU_125889_0_0_6"/>
<dbReference type="Proteomes" id="UP000000747">
    <property type="component" value="Chromosome"/>
</dbReference>
<dbReference type="GO" id="GO:0005886">
    <property type="term" value="C:plasma membrane"/>
    <property type="evidence" value="ECO:0007669"/>
    <property type="project" value="UniProtKB-SubCell"/>
</dbReference>
<dbReference type="HAMAP" id="MF_01874">
    <property type="entry name" value="UPF0756"/>
    <property type="match status" value="1"/>
</dbReference>
<dbReference type="InterPro" id="IPR007382">
    <property type="entry name" value="UPF0756_TM"/>
</dbReference>
<dbReference type="PANTHER" id="PTHR38452">
    <property type="entry name" value="UPF0756 MEMBRANE PROTEIN YEAL"/>
    <property type="match status" value="1"/>
</dbReference>
<dbReference type="PANTHER" id="PTHR38452:SF1">
    <property type="entry name" value="UPF0756 MEMBRANE PROTEIN YEAL"/>
    <property type="match status" value="1"/>
</dbReference>
<dbReference type="Pfam" id="PF04284">
    <property type="entry name" value="DUF441"/>
    <property type="match status" value="1"/>
</dbReference>
<gene>
    <name evidence="1" type="primary">yeaL</name>
    <name type="ordered locus">ECS88_1843</name>
</gene>